<gene>
    <name type="primary">TAF4</name>
    <name type="synonym">MPT1</name>
    <name type="synonym">TAF48</name>
    <name type="synonym">TSG2</name>
    <name type="ordered locus">YMR005W</name>
    <name type="ORF">YM8270.07</name>
</gene>
<dbReference type="EMBL" id="X79240">
    <property type="protein sequence ID" value="CAA55822.1"/>
    <property type="molecule type" value="Genomic_DNA"/>
</dbReference>
<dbReference type="EMBL" id="Z48613">
    <property type="protein sequence ID" value="CAA88520.1"/>
    <property type="molecule type" value="Genomic_DNA"/>
</dbReference>
<dbReference type="EMBL" id="BK006946">
    <property type="protein sequence ID" value="DAA09904.1"/>
    <property type="molecule type" value="Genomic_DNA"/>
</dbReference>
<dbReference type="PIR" id="S45013">
    <property type="entry name" value="S45013"/>
</dbReference>
<dbReference type="RefSeq" id="NP_013718.1">
    <property type="nucleotide sequence ID" value="NM_001182501.1"/>
</dbReference>
<dbReference type="SMR" id="P50105"/>
<dbReference type="BioGRID" id="35175">
    <property type="interactions" value="264"/>
</dbReference>
<dbReference type="ComplexPortal" id="CPX-1642">
    <property type="entry name" value="General transcription factor complex TFIID"/>
</dbReference>
<dbReference type="DIP" id="DIP-789N"/>
<dbReference type="FunCoup" id="P50105">
    <property type="interactions" value="423"/>
</dbReference>
<dbReference type="IntAct" id="P50105">
    <property type="interactions" value="37"/>
</dbReference>
<dbReference type="MINT" id="P50105"/>
<dbReference type="STRING" id="4932.YMR005W"/>
<dbReference type="iPTMnet" id="P50105"/>
<dbReference type="PaxDb" id="4932-YMR005W"/>
<dbReference type="PeptideAtlas" id="P50105"/>
<dbReference type="EnsemblFungi" id="YMR005W_mRNA">
    <property type="protein sequence ID" value="YMR005W"/>
    <property type="gene ID" value="YMR005W"/>
</dbReference>
<dbReference type="GeneID" id="855017"/>
<dbReference type="KEGG" id="sce:YMR005W"/>
<dbReference type="AGR" id="SGD:S000004607"/>
<dbReference type="SGD" id="S000004607">
    <property type="gene designation" value="TAF4"/>
</dbReference>
<dbReference type="VEuPathDB" id="FungiDB:YMR005W"/>
<dbReference type="eggNOG" id="KOG2341">
    <property type="taxonomic scope" value="Eukaryota"/>
</dbReference>
<dbReference type="GeneTree" id="ENSGT00390000011620"/>
<dbReference type="HOGENOM" id="CLU_036634_0_0_1"/>
<dbReference type="InParanoid" id="P50105"/>
<dbReference type="OMA" id="YGWLTSS"/>
<dbReference type="OrthoDB" id="21060at2759"/>
<dbReference type="BioCyc" id="YEAST:G3O-32716-MONOMER"/>
<dbReference type="Reactome" id="R-SCE-674695">
    <property type="pathway name" value="RNA Polymerase II Pre-transcription Events"/>
</dbReference>
<dbReference type="Reactome" id="R-SCE-73776">
    <property type="pathway name" value="RNA Polymerase II Promoter Escape"/>
</dbReference>
<dbReference type="Reactome" id="R-SCE-73779">
    <property type="pathway name" value="RNA Polymerase II Transcription Pre-Initiation And Promoter Opening"/>
</dbReference>
<dbReference type="Reactome" id="R-SCE-75953">
    <property type="pathway name" value="RNA Polymerase II Transcription Initiation"/>
</dbReference>
<dbReference type="Reactome" id="R-SCE-76042">
    <property type="pathway name" value="RNA Polymerase II Transcription Initiation And Promoter Clearance"/>
</dbReference>
<dbReference type="BioGRID-ORCS" id="855017">
    <property type="hits" value="2 hits in 10 CRISPR screens"/>
</dbReference>
<dbReference type="PRO" id="PR:P50105"/>
<dbReference type="Proteomes" id="UP000002311">
    <property type="component" value="Chromosome XIII"/>
</dbReference>
<dbReference type="RNAct" id="P50105">
    <property type="molecule type" value="protein"/>
</dbReference>
<dbReference type="GO" id="GO:0005634">
    <property type="term" value="C:nucleus"/>
    <property type="evidence" value="ECO:0000303"/>
    <property type="project" value="ComplexPortal"/>
</dbReference>
<dbReference type="GO" id="GO:0005669">
    <property type="term" value="C:transcription factor TFIID complex"/>
    <property type="evidence" value="ECO:0000314"/>
    <property type="project" value="SGD"/>
</dbReference>
<dbReference type="GO" id="GO:0003682">
    <property type="term" value="F:chromatin binding"/>
    <property type="evidence" value="ECO:0000314"/>
    <property type="project" value="SGD"/>
</dbReference>
<dbReference type="GO" id="GO:0003677">
    <property type="term" value="F:DNA binding"/>
    <property type="evidence" value="ECO:0000314"/>
    <property type="project" value="UniProtKB"/>
</dbReference>
<dbReference type="GO" id="GO:0061629">
    <property type="term" value="F:RNA polymerase II-specific DNA-binding transcription factor binding"/>
    <property type="evidence" value="ECO:0000314"/>
    <property type="project" value="SGD"/>
</dbReference>
<dbReference type="GO" id="GO:0045944">
    <property type="term" value="P:positive regulation of transcription by RNA polymerase II"/>
    <property type="evidence" value="ECO:0000314"/>
    <property type="project" value="ComplexPortal"/>
</dbReference>
<dbReference type="GO" id="GO:0006366">
    <property type="term" value="P:transcription by RNA polymerase II"/>
    <property type="evidence" value="ECO:0000314"/>
    <property type="project" value="SGD"/>
</dbReference>
<dbReference type="GO" id="GO:0006367">
    <property type="term" value="P:transcription initiation at RNA polymerase II promoter"/>
    <property type="evidence" value="ECO:0000318"/>
    <property type="project" value="GO_Central"/>
</dbReference>
<dbReference type="CDD" id="cd08045">
    <property type="entry name" value="HFD_TAF4"/>
    <property type="match status" value="1"/>
</dbReference>
<dbReference type="InterPro" id="IPR045144">
    <property type="entry name" value="TAF4"/>
</dbReference>
<dbReference type="InterPro" id="IPR007900">
    <property type="entry name" value="TAF4_C"/>
</dbReference>
<dbReference type="PANTHER" id="PTHR15138">
    <property type="entry name" value="TRANSCRIPTION INITIATION FACTOR TFIID SUBUNIT 4"/>
    <property type="match status" value="1"/>
</dbReference>
<dbReference type="PANTHER" id="PTHR15138:SF14">
    <property type="entry name" value="TRANSCRIPTION INITIATION FACTOR TFIID SUBUNIT 4"/>
    <property type="match status" value="1"/>
</dbReference>
<dbReference type="Pfam" id="PF05236">
    <property type="entry name" value="TAF4"/>
    <property type="match status" value="1"/>
</dbReference>
<name>TAF4_YEAST</name>
<proteinExistence type="evidence at protein level"/>
<protein>
    <recommendedName>
        <fullName>Transcription initiation factor TFIID subunit 4</fullName>
    </recommendedName>
    <alternativeName>
        <fullName>MPT-1</fullName>
    </alternativeName>
    <alternativeName>
        <fullName>TAF suppressor gene 2 protein</fullName>
    </alternativeName>
    <alternativeName>
        <fullName>TAFII-48</fullName>
    </alternativeName>
    <alternativeName>
        <fullName>TBP-associated factor 4</fullName>
    </alternativeName>
    <alternativeName>
        <fullName>TBP-associated factor 48 kDa</fullName>
    </alternativeName>
</protein>
<keyword id="KW-0175">Coiled coil</keyword>
<keyword id="KW-0539">Nucleus</keyword>
<keyword id="KW-0597">Phosphoprotein</keyword>
<keyword id="KW-1185">Reference proteome</keyword>
<keyword id="KW-0804">Transcription</keyword>
<keyword id="KW-0805">Transcription regulation</keyword>
<comment type="function">
    <text evidence="3 4 5 6 7 8 11">Functions as a component of the DNA-binding general transcription factor complex TFIID. Binding of TFIID to a promoter (with or without TATA element) is the initial step in pre-initiation complex (PIC) formation. TFIID plays a key role in the regulation of gene expression by RNA polymerase II through different activities such as transcription activator interaction, core promoter recognition and selectivity, TFIIA and TFIIB interaction, chromatin modification (histone acetylation by TAF1), facilitation of DNA opening and initiation of transcription.</text>
</comment>
<comment type="subunit">
    <text evidence="3 6">TAF4 heterodimerizes with TAF12, forming ultimately an octamer consisting of a TAF6/TAF9 heterotetramer core flanked by TAF4/TAF12 dimers on either side, similar to the histone H2A/H2B/H3/H4 octamer. The 1.2 MDa TFIID complex is composed of TATA binding protein (TBP) and the 14 TBP-associated factors. One copy of each TAF1, TAF2, TAF3, TAF7, TAF8, TAF11, TAF13, two copies of each TAF4, TAF5, TAF6, TAF9, TAF10, TAF12, and three copies of TAF14.</text>
</comment>
<comment type="interaction">
    <interactant intactId="EBI-11231">
        <id>P50105</id>
    </interactant>
    <interactant intactId="EBI-18855">
        <id>P46677</id>
        <label>TAF1</label>
    </interactant>
    <organismsDiffer>false</organismsDiffer>
    <experiments>7</experiments>
</comment>
<comment type="interaction">
    <interactant intactId="EBI-11231">
        <id>P50105</id>
    </interactant>
    <interactant intactId="EBI-18884">
        <id>Q04226</id>
        <label>TAF11</label>
    </interactant>
    <organismsDiffer>false</organismsDiffer>
    <experiments>4</experiments>
</comment>
<comment type="interaction">
    <interactant intactId="EBI-11231">
        <id>P50105</id>
    </interactant>
    <interactant intactId="EBI-35097">
        <id>Q03761</id>
        <label>TAF12</label>
    </interactant>
    <organismsDiffer>false</organismsDiffer>
    <experiments>14</experiments>
</comment>
<comment type="interaction">
    <interactant intactId="EBI-11231">
        <id>P50105</id>
    </interactant>
    <interactant intactId="EBI-18868">
        <id>P38129</id>
        <label>TAF5</label>
    </interactant>
    <organismsDiffer>false</organismsDiffer>
    <experiments>13</experiments>
</comment>
<comment type="interaction">
    <interactant intactId="EBI-11231">
        <id>P50105</id>
    </interactant>
    <interactant intactId="EBI-27500">
        <id>Q05027</id>
        <label>TAF9</label>
    </interactant>
    <organismsDiffer>false</organismsDiffer>
    <experiments>11</experiments>
</comment>
<comment type="subcellular location">
    <subcellularLocation>
        <location evidence="9">Nucleus</location>
    </subcellularLocation>
</comment>
<comment type="miscellaneous">
    <text evidence="10">Present with 1900 molecules/cell in log phase SD medium.</text>
</comment>
<comment type="similarity">
    <text evidence="12">Belongs to the TAF4 family.</text>
</comment>
<evidence type="ECO:0000255" key="1"/>
<evidence type="ECO:0000256" key="2">
    <source>
        <dbReference type="SAM" id="MobiDB-lite"/>
    </source>
</evidence>
<evidence type="ECO:0000269" key="3">
    <source>
    </source>
</evidence>
<evidence type="ECO:0000269" key="4">
    <source>
    </source>
</evidence>
<evidence type="ECO:0000269" key="5">
    <source>
    </source>
</evidence>
<evidence type="ECO:0000269" key="6">
    <source>
    </source>
</evidence>
<evidence type="ECO:0000269" key="7">
    <source>
    </source>
</evidence>
<evidence type="ECO:0000269" key="8">
    <source>
    </source>
</evidence>
<evidence type="ECO:0000269" key="9">
    <source>
    </source>
</evidence>
<evidence type="ECO:0000269" key="10">
    <source>
    </source>
</evidence>
<evidence type="ECO:0000269" key="11">
    <source>
    </source>
</evidence>
<evidence type="ECO:0000305" key="12"/>
<evidence type="ECO:0007744" key="13">
    <source>
    </source>
</evidence>
<evidence type="ECO:0007744" key="14">
    <source>
    </source>
</evidence>
<evidence type="ECO:0007744" key="15">
    <source>
    </source>
</evidence>
<organism>
    <name type="scientific">Saccharomyces cerevisiae (strain ATCC 204508 / S288c)</name>
    <name type="common">Baker's yeast</name>
    <dbReference type="NCBI Taxonomy" id="559292"/>
    <lineage>
        <taxon>Eukaryota</taxon>
        <taxon>Fungi</taxon>
        <taxon>Dikarya</taxon>
        <taxon>Ascomycota</taxon>
        <taxon>Saccharomycotina</taxon>
        <taxon>Saccharomycetes</taxon>
        <taxon>Saccharomycetales</taxon>
        <taxon>Saccharomycetaceae</taxon>
        <taxon>Saccharomyces</taxon>
    </lineage>
</organism>
<feature type="chain" id="PRO_0000118871" description="Transcription initiation factor TFIID subunit 4">
    <location>
        <begin position="1"/>
        <end position="388"/>
    </location>
</feature>
<feature type="domain" description="Histone-fold">
    <location>
        <begin position="193"/>
        <end position="261"/>
    </location>
</feature>
<feature type="region of interest" description="Disordered" evidence="2">
    <location>
        <begin position="1"/>
        <end position="143"/>
    </location>
</feature>
<feature type="coiled-coil region" evidence="1">
    <location>
        <begin position="279"/>
        <end position="297"/>
    </location>
</feature>
<feature type="compositionally biased region" description="Polar residues" evidence="2">
    <location>
        <begin position="12"/>
        <end position="22"/>
    </location>
</feature>
<feature type="compositionally biased region" description="Polar residues" evidence="2">
    <location>
        <begin position="43"/>
        <end position="64"/>
    </location>
</feature>
<feature type="compositionally biased region" description="Polar residues" evidence="2">
    <location>
        <begin position="79"/>
        <end position="98"/>
    </location>
</feature>
<feature type="compositionally biased region" description="Basic and acidic residues" evidence="2">
    <location>
        <begin position="106"/>
        <end position="126"/>
    </location>
</feature>
<feature type="compositionally biased region" description="Low complexity" evidence="2">
    <location>
        <begin position="127"/>
        <end position="139"/>
    </location>
</feature>
<feature type="modified residue" description="Phosphoserine" evidence="13 14 15">
    <location>
        <position position="36"/>
    </location>
</feature>
<feature type="modified residue" description="Phosphoserine" evidence="15">
    <location>
        <position position="49"/>
    </location>
</feature>
<feature type="modified residue" description="Phosphoserine" evidence="15">
    <location>
        <position position="80"/>
    </location>
</feature>
<accession>P50105</accession>
<accession>D6VZI0</accession>
<sequence>MANSPKKPSDGTGVSASDTPKYQHTVPETKPAFNLSPGKASELSHSLPSPSQIKSTAHVSSTHNDAAGNTDDSVLPKNVSPTTNLRVESNGDTNNMFSSPAGLALPKKDDKKKNKGTSKADSKDGKASNSSGQNAQQQSDPNKMQDVLFSAGIDVREEEALLNSSINASKSQVQTNNVKIPNHLPFLHPEQVSNYMRKVGKEQNFNLTPTKNPEILDMMSSACENYMRDILTNAIVISRHRRKAVKINSGRRSEVSAALRAIALIQKKEEERRVKKRIALGLEKEDYENKIDSEETLHRASNVTAGLRAGSKKQYGWLTSSVNKPTSLGAKSSGKVASDITARGESGLKFREAREEPGIVMRDLLFALENRRNSVQTIISKGYAKIRD</sequence>
<reference key="1">
    <citation type="submission" date="1994-05" db="EMBL/GenBank/DDBJ databases">
        <authorList>
            <person name="Estey L.A."/>
            <person name="Douglas M.G."/>
        </authorList>
    </citation>
    <scope>NUCLEOTIDE SEQUENCE [GENOMIC DNA]</scope>
    <source>
        <strain>DBY939</strain>
    </source>
</reference>
<reference key="2">
    <citation type="journal article" date="1997" name="Nature">
        <title>The nucleotide sequence of Saccharomyces cerevisiae chromosome XIII.</title>
        <authorList>
            <person name="Bowman S."/>
            <person name="Churcher C.M."/>
            <person name="Badcock K."/>
            <person name="Brown D."/>
            <person name="Chillingworth T."/>
            <person name="Connor R."/>
            <person name="Dedman K."/>
            <person name="Devlin K."/>
            <person name="Gentles S."/>
            <person name="Hamlin N."/>
            <person name="Hunt S."/>
            <person name="Jagels K."/>
            <person name="Lye G."/>
            <person name="Moule S."/>
            <person name="Odell C."/>
            <person name="Pearson D."/>
            <person name="Rajandream M.A."/>
            <person name="Rice P."/>
            <person name="Skelton J."/>
            <person name="Walsh S.V."/>
            <person name="Whitehead S."/>
            <person name="Barrell B.G."/>
        </authorList>
    </citation>
    <scope>NUCLEOTIDE SEQUENCE [LARGE SCALE GENOMIC DNA]</scope>
    <source>
        <strain>ATCC 204508 / S288c</strain>
    </source>
</reference>
<reference key="3">
    <citation type="journal article" date="2014" name="G3 (Bethesda)">
        <title>The reference genome sequence of Saccharomyces cerevisiae: Then and now.</title>
        <authorList>
            <person name="Engel S.R."/>
            <person name="Dietrich F.S."/>
            <person name="Fisk D.G."/>
            <person name="Binkley G."/>
            <person name="Balakrishnan R."/>
            <person name="Costanzo M.C."/>
            <person name="Dwight S.S."/>
            <person name="Hitz B.C."/>
            <person name="Karra K."/>
            <person name="Nash R.S."/>
            <person name="Weng S."/>
            <person name="Wong E.D."/>
            <person name="Lloyd P."/>
            <person name="Skrzypek M.S."/>
            <person name="Miyasato S.R."/>
            <person name="Simison M."/>
            <person name="Cherry J.M."/>
        </authorList>
    </citation>
    <scope>GENOME REANNOTATION</scope>
    <source>
        <strain>ATCC 204508 / S288c</strain>
    </source>
</reference>
<reference key="4">
    <citation type="journal article" date="1998" name="Cell">
        <title>Human TAF(II)28 and TAF(II)18 interact through a histone fold encoded by atypical evolutionary conserved motifs also found in the SPT3 family.</title>
        <authorList>
            <person name="Birck C."/>
            <person name="Poch O."/>
            <person name="Romier C."/>
            <person name="Ruff M."/>
            <person name="Mengus G."/>
            <person name="Lavigne A.C."/>
            <person name="Davidson I."/>
            <person name="Moras D."/>
        </authorList>
    </citation>
    <scope>FUNCTION</scope>
    <scope>TAF-TAF INTERACTION THROUGH HISTONE-FOLD DOMAIN</scope>
</reference>
<reference key="5">
    <citation type="journal article" date="2000" name="J. Biol. Chem.">
        <title>Identification of two novel TAF subunits of the yeast Saccharomyces cerevisiae TFIID complex.</title>
        <authorList>
            <person name="Sanders S.L."/>
            <person name="Weil P.A."/>
        </authorList>
    </citation>
    <scope>FUNCTION</scope>
    <scope>SUBUNIT</scope>
</reference>
<reference key="6">
    <citation type="journal article" date="2001" name="Mol. Cell. Biol.">
        <title>Histone folds mediate selective heterodimerization of yeast TAF(II)25 with TFIID components yTAF(II)47 and yTAF(II)65 and with SAGA component ySPT7.</title>
        <authorList>
            <person name="Gangloff Y.G."/>
            <person name="Sanders S.L."/>
            <person name="Romier C."/>
            <person name="Kirschner D.B."/>
            <person name="Weil P.A."/>
            <person name="Tora L."/>
            <person name="Davidson I."/>
        </authorList>
    </citation>
    <scope>FUNCTION</scope>
    <scope>INTERACTION IN TFIID AND SAGA</scope>
</reference>
<reference key="7">
    <citation type="journal article" date="2001" name="Trends Biochem. Sci.">
        <title>The histone fold is a key structural motif of transcription factor TFIID.</title>
        <authorList>
            <person name="Gangloff Y.G."/>
            <person name="Romier C."/>
            <person name="Thuault S."/>
            <person name="Werten S."/>
            <person name="Davidson I."/>
        </authorList>
    </citation>
    <scope>FUNCTION</scope>
    <scope>HISTONE-FOLD DOMAIN CHARACTERIZATION</scope>
</reference>
<reference key="8">
    <citation type="journal article" date="2001" name="Nat. Struct. Biol.">
        <title>A histone fold TAF octamer within the yeast TFIID transcriptional coactivator.</title>
        <authorList>
            <person name="Selleck W."/>
            <person name="Howley R."/>
            <person name="Fang Q."/>
            <person name="Podolny V."/>
            <person name="Fried M.G."/>
            <person name="Buratowski S."/>
            <person name="Tan S."/>
        </authorList>
    </citation>
    <scope>FUNCTION</scope>
    <scope>SUBUNIT</scope>
</reference>
<reference key="9">
    <citation type="journal article" date="2002" name="Mol. Cell. Biol.">
        <title>Molecular characterization of Saccharomyces cerevisiae TFIID.</title>
        <authorList>
            <person name="Sanders S.L."/>
            <person name="Garbett K.A."/>
            <person name="Weil P.A."/>
        </authorList>
    </citation>
    <scope>FUNCTION</scope>
    <scope>TFIID STOICHIOMETRY</scope>
</reference>
<reference key="10">
    <citation type="journal article" date="2002" name="Plant Mol. Biol.">
        <title>Multi-protein complexes in eukaryotic gene transcription.</title>
        <authorList>
            <person name="Martinez E."/>
        </authorList>
    </citation>
    <scope>FUNCTION</scope>
</reference>
<reference key="11">
    <citation type="journal article" date="2003" name="Nature">
        <title>Global analysis of protein localization in budding yeast.</title>
        <authorList>
            <person name="Huh W.-K."/>
            <person name="Falvo J.V."/>
            <person name="Gerke L.C."/>
            <person name="Carroll A.S."/>
            <person name="Howson R.W."/>
            <person name="Weissman J.S."/>
            <person name="O'Shea E.K."/>
        </authorList>
    </citation>
    <scope>SUBCELLULAR LOCATION [LARGE SCALE ANALYSIS]</scope>
</reference>
<reference key="12">
    <citation type="journal article" date="2003" name="Nature">
        <title>Global analysis of protein expression in yeast.</title>
        <authorList>
            <person name="Ghaemmaghami S."/>
            <person name="Huh W.-K."/>
            <person name="Bower K."/>
            <person name="Howson R.W."/>
            <person name="Belle A."/>
            <person name="Dephoure N."/>
            <person name="O'Shea E.K."/>
            <person name="Weissman J.S."/>
        </authorList>
    </citation>
    <scope>LEVEL OF PROTEIN EXPRESSION [LARGE SCALE ANALYSIS]</scope>
</reference>
<reference key="13">
    <citation type="journal article" date="2002" name="EMBO J.">
        <title>Mapping histone fold TAFs within yeast TFIID.</title>
        <authorList>
            <person name="Leurent C."/>
            <person name="Sanders S.L."/>
            <person name="Ruhlmann C."/>
            <person name="Mallouh V."/>
            <person name="Weil P.A."/>
            <person name="Kirschner D.B."/>
            <person name="Tora L."/>
            <person name="Schultz P."/>
        </authorList>
    </citation>
    <scope>3D-STRUCTURE</scope>
    <scope>ELECTRON MICROSCOPY OF TFIID</scope>
</reference>
<reference key="14">
    <citation type="journal article" date="2007" name="J. Proteome Res.">
        <title>Large-scale phosphorylation analysis of alpha-factor-arrested Saccharomyces cerevisiae.</title>
        <authorList>
            <person name="Li X."/>
            <person name="Gerber S.A."/>
            <person name="Rudner A.D."/>
            <person name="Beausoleil S.A."/>
            <person name="Haas W."/>
            <person name="Villen J."/>
            <person name="Elias J.E."/>
            <person name="Gygi S.P."/>
        </authorList>
    </citation>
    <scope>PHOSPHORYLATION [LARGE SCALE ANALYSIS] AT SER-36</scope>
    <scope>IDENTIFICATION BY MASS SPECTROMETRY [LARGE SCALE ANALYSIS]</scope>
    <source>
        <strain>ADR376</strain>
    </source>
</reference>
<reference key="15">
    <citation type="journal article" date="2007" name="Proc. Natl. Acad. Sci. U.S.A.">
        <title>Analysis of phosphorylation sites on proteins from Saccharomyces cerevisiae by electron transfer dissociation (ETD) mass spectrometry.</title>
        <authorList>
            <person name="Chi A."/>
            <person name="Huttenhower C."/>
            <person name="Geer L.Y."/>
            <person name="Coon J.J."/>
            <person name="Syka J.E.P."/>
            <person name="Bai D.L."/>
            <person name="Shabanowitz J."/>
            <person name="Burke D.J."/>
            <person name="Troyanskaya O.G."/>
            <person name="Hunt D.F."/>
        </authorList>
    </citation>
    <scope>PHOSPHORYLATION [LARGE SCALE ANALYSIS] AT SER-36</scope>
    <scope>IDENTIFICATION BY MASS SPECTROMETRY [LARGE SCALE ANALYSIS]</scope>
</reference>
<reference key="16">
    <citation type="journal article" date="2008" name="Mol. Cell. Proteomics">
        <title>A multidimensional chromatography technology for in-depth phosphoproteome analysis.</title>
        <authorList>
            <person name="Albuquerque C.P."/>
            <person name="Smolka M.B."/>
            <person name="Payne S.H."/>
            <person name="Bafna V."/>
            <person name="Eng J."/>
            <person name="Zhou H."/>
        </authorList>
    </citation>
    <scope>PHOSPHORYLATION [LARGE SCALE ANALYSIS] AT SER-36; SER-49 AND SER-80</scope>
    <scope>IDENTIFICATION BY MASS SPECTROMETRY [LARGE SCALE ANALYSIS]</scope>
</reference>